<comment type="function">
    <text evidence="1">Catalyzes the isomerization between 2-isopropylmalate and 3-isopropylmalate, via the formation of 2-isopropylmaleate.</text>
</comment>
<comment type="catalytic activity">
    <reaction evidence="1">
        <text>(2R,3S)-3-isopropylmalate = (2S)-2-isopropylmalate</text>
        <dbReference type="Rhea" id="RHEA:32287"/>
        <dbReference type="ChEBI" id="CHEBI:1178"/>
        <dbReference type="ChEBI" id="CHEBI:35121"/>
        <dbReference type="EC" id="4.2.1.33"/>
    </reaction>
</comment>
<comment type="cofactor">
    <cofactor evidence="1">
        <name>[4Fe-4S] cluster</name>
        <dbReference type="ChEBI" id="CHEBI:49883"/>
    </cofactor>
    <text evidence="1">Binds 1 [4Fe-4S] cluster per subunit.</text>
</comment>
<comment type="pathway">
    <text evidence="1">Amino-acid biosynthesis; L-leucine biosynthesis; L-leucine from 3-methyl-2-oxobutanoate: step 2/4.</text>
</comment>
<comment type="subunit">
    <text evidence="1">Heterodimer of LeuC and LeuD.</text>
</comment>
<comment type="similarity">
    <text evidence="1">Belongs to the aconitase/IPM isomerase family. LeuC type 2 subfamily.</text>
</comment>
<sequence length="426" mass="45917">MGQTITEKIFSEHAGKKVHAGEIVRVDIDMIIGNDITTPISIRAFEESGAEKLARPDNFSIVMDHYIPAKDIASANQAKISREFAYKHDLKYFFDEKDMGIEHALLPEKGLVIPGDVIIGADSHTCTHGALGAFSTGMGSTDLAFGMITGGNWFKVPETIKVVLTGKSGEHIYGKDIILELIRILGVDGALYKALEFTGDAIQHLAMDDRFSMCNMAIEAGAKSGIIAVDNITEAYLIERAEANGGLRSEPKIHYSDEDATYCQVVTIDVENLSPVIAYPFLPSNGKPVEQAVKDDLKIDQVMIGSCTNGRIEDLRIAAEIMKGKRVAKHTRMIVTPATQKILMQAQHEGLMDILIEAGAVVSNPTCGACLGGYMGILGDGERCVATTNRNFVGRMGARTSEIYLANSAVAAASAIAGKIVDPREI</sequence>
<feature type="chain" id="PRO_1000063655" description="3-isopropylmalate dehydratase large subunit">
    <location>
        <begin position="1"/>
        <end position="426"/>
    </location>
</feature>
<feature type="binding site" evidence="1">
    <location>
        <position position="307"/>
    </location>
    <ligand>
        <name>[4Fe-4S] cluster</name>
        <dbReference type="ChEBI" id="CHEBI:49883"/>
    </ligand>
</feature>
<feature type="binding site" evidence="1">
    <location>
        <position position="367"/>
    </location>
    <ligand>
        <name>[4Fe-4S] cluster</name>
        <dbReference type="ChEBI" id="CHEBI:49883"/>
    </ligand>
</feature>
<feature type="binding site" evidence="1">
    <location>
        <position position="370"/>
    </location>
    <ligand>
        <name>[4Fe-4S] cluster</name>
        <dbReference type="ChEBI" id="CHEBI:49883"/>
    </ligand>
</feature>
<name>LEUC_SULNB</name>
<organism>
    <name type="scientific">Sulfurovum sp. (strain NBC37-1)</name>
    <dbReference type="NCBI Taxonomy" id="387093"/>
    <lineage>
        <taxon>Bacteria</taxon>
        <taxon>Pseudomonadati</taxon>
        <taxon>Campylobacterota</taxon>
        <taxon>Epsilonproteobacteria</taxon>
        <taxon>Campylobacterales</taxon>
        <taxon>Sulfurovaceae</taxon>
        <taxon>Sulfurovum</taxon>
    </lineage>
</organism>
<evidence type="ECO:0000255" key="1">
    <source>
        <dbReference type="HAMAP-Rule" id="MF_01027"/>
    </source>
</evidence>
<reference key="1">
    <citation type="journal article" date="2007" name="Proc. Natl. Acad. Sci. U.S.A.">
        <title>Deep-sea vent epsilon-proteobacterial genomes provide insights into emergence of pathogens.</title>
        <authorList>
            <person name="Nakagawa S."/>
            <person name="Takaki Y."/>
            <person name="Shimamura S."/>
            <person name="Reysenbach A.-L."/>
            <person name="Takai K."/>
            <person name="Horikoshi K."/>
        </authorList>
    </citation>
    <scope>NUCLEOTIDE SEQUENCE [LARGE SCALE GENOMIC DNA]</scope>
    <source>
        <strain>NBC37-1</strain>
    </source>
</reference>
<dbReference type="EC" id="4.2.1.33" evidence="1"/>
<dbReference type="EMBL" id="AP009179">
    <property type="protein sequence ID" value="BAF71107.1"/>
    <property type="molecule type" value="Genomic_DNA"/>
</dbReference>
<dbReference type="RefSeq" id="WP_011979840.1">
    <property type="nucleotide sequence ID" value="NC_009663.1"/>
</dbReference>
<dbReference type="SMR" id="A6Q6J8"/>
<dbReference type="STRING" id="387093.SUN_0147"/>
<dbReference type="KEGG" id="sun:SUN_0147"/>
<dbReference type="eggNOG" id="COG0065">
    <property type="taxonomic scope" value="Bacteria"/>
</dbReference>
<dbReference type="HOGENOM" id="CLU_006714_3_4_7"/>
<dbReference type="OrthoDB" id="9764318at2"/>
<dbReference type="UniPathway" id="UPA00048">
    <property type="reaction ID" value="UER00071"/>
</dbReference>
<dbReference type="Proteomes" id="UP000006378">
    <property type="component" value="Chromosome"/>
</dbReference>
<dbReference type="GO" id="GO:0003861">
    <property type="term" value="F:3-isopropylmalate dehydratase activity"/>
    <property type="evidence" value="ECO:0007669"/>
    <property type="project" value="UniProtKB-UniRule"/>
</dbReference>
<dbReference type="GO" id="GO:0051539">
    <property type="term" value="F:4 iron, 4 sulfur cluster binding"/>
    <property type="evidence" value="ECO:0007669"/>
    <property type="project" value="UniProtKB-KW"/>
</dbReference>
<dbReference type="GO" id="GO:0046872">
    <property type="term" value="F:metal ion binding"/>
    <property type="evidence" value="ECO:0007669"/>
    <property type="project" value="UniProtKB-KW"/>
</dbReference>
<dbReference type="GO" id="GO:0009098">
    <property type="term" value="P:L-leucine biosynthetic process"/>
    <property type="evidence" value="ECO:0007669"/>
    <property type="project" value="UniProtKB-UniRule"/>
</dbReference>
<dbReference type="CDD" id="cd01583">
    <property type="entry name" value="IPMI"/>
    <property type="match status" value="1"/>
</dbReference>
<dbReference type="Gene3D" id="3.30.499.10">
    <property type="entry name" value="Aconitase, domain 3"/>
    <property type="match status" value="2"/>
</dbReference>
<dbReference type="HAMAP" id="MF_01027">
    <property type="entry name" value="LeuC_type2"/>
    <property type="match status" value="1"/>
</dbReference>
<dbReference type="InterPro" id="IPR015931">
    <property type="entry name" value="Acnase/IPM_dHydase_lsu_aba_1/3"/>
</dbReference>
<dbReference type="InterPro" id="IPR001030">
    <property type="entry name" value="Acoase/IPM_deHydtase_lsu_aba"/>
</dbReference>
<dbReference type="InterPro" id="IPR018136">
    <property type="entry name" value="Aconitase_4Fe-4S_BS"/>
</dbReference>
<dbReference type="InterPro" id="IPR036008">
    <property type="entry name" value="Aconitase_4Fe-4S_dom"/>
</dbReference>
<dbReference type="InterPro" id="IPR011826">
    <property type="entry name" value="HAcnase/IPMdehydase_lsu_prok"/>
</dbReference>
<dbReference type="InterPro" id="IPR006251">
    <property type="entry name" value="Homoacnase/IPMdehydase_lsu"/>
</dbReference>
<dbReference type="InterPro" id="IPR050067">
    <property type="entry name" value="IPM_dehydratase_rel_enz"/>
</dbReference>
<dbReference type="InterPro" id="IPR033941">
    <property type="entry name" value="IPMI_cat"/>
</dbReference>
<dbReference type="InterPro" id="IPR011823">
    <property type="entry name" value="IsopropMal_deHydtase_lsu_bac"/>
</dbReference>
<dbReference type="NCBIfam" id="TIGR01343">
    <property type="entry name" value="hacA_fam"/>
    <property type="match status" value="1"/>
</dbReference>
<dbReference type="NCBIfam" id="TIGR02086">
    <property type="entry name" value="IPMI_arch"/>
    <property type="match status" value="1"/>
</dbReference>
<dbReference type="NCBIfam" id="TIGR02083">
    <property type="entry name" value="LEU2"/>
    <property type="match status" value="1"/>
</dbReference>
<dbReference type="NCBIfam" id="NF001614">
    <property type="entry name" value="PRK00402.1"/>
    <property type="match status" value="1"/>
</dbReference>
<dbReference type="PANTHER" id="PTHR43822:SF16">
    <property type="entry name" value="3-ISOPROPYLMALATE DEHYDRATASE LARGE SUBUNIT 2"/>
    <property type="match status" value="1"/>
</dbReference>
<dbReference type="PANTHER" id="PTHR43822">
    <property type="entry name" value="HOMOACONITASE, MITOCHONDRIAL-RELATED"/>
    <property type="match status" value="1"/>
</dbReference>
<dbReference type="Pfam" id="PF00330">
    <property type="entry name" value="Aconitase"/>
    <property type="match status" value="1"/>
</dbReference>
<dbReference type="PRINTS" id="PR00415">
    <property type="entry name" value="ACONITASE"/>
</dbReference>
<dbReference type="SUPFAM" id="SSF53732">
    <property type="entry name" value="Aconitase iron-sulfur domain"/>
    <property type="match status" value="1"/>
</dbReference>
<dbReference type="PROSITE" id="PS00450">
    <property type="entry name" value="ACONITASE_1"/>
    <property type="match status" value="1"/>
</dbReference>
<dbReference type="PROSITE" id="PS01244">
    <property type="entry name" value="ACONITASE_2"/>
    <property type="match status" value="1"/>
</dbReference>
<proteinExistence type="inferred from homology"/>
<keyword id="KW-0004">4Fe-4S</keyword>
<keyword id="KW-0028">Amino-acid biosynthesis</keyword>
<keyword id="KW-0100">Branched-chain amino acid biosynthesis</keyword>
<keyword id="KW-0408">Iron</keyword>
<keyword id="KW-0411">Iron-sulfur</keyword>
<keyword id="KW-0432">Leucine biosynthesis</keyword>
<keyword id="KW-0456">Lyase</keyword>
<keyword id="KW-0479">Metal-binding</keyword>
<accession>A6Q6J8</accession>
<protein>
    <recommendedName>
        <fullName evidence="1">3-isopropylmalate dehydratase large subunit</fullName>
        <ecNumber evidence="1">4.2.1.33</ecNumber>
    </recommendedName>
    <alternativeName>
        <fullName evidence="1">Alpha-IPM isomerase</fullName>
        <shortName evidence="1">IPMI</shortName>
    </alternativeName>
    <alternativeName>
        <fullName evidence="1">Isopropylmalate isomerase</fullName>
    </alternativeName>
</protein>
<gene>
    <name evidence="1" type="primary">leuC</name>
    <name type="ordered locus">SUN_0147</name>
</gene>